<accession>Q9Y757</accession>
<proteinExistence type="evidence at transcript level"/>
<sequence length="519" mass="59167">MFDVDTVHNFFTSWYGILLAVLIGYHVFDYIRIQIVMKKLGCVSPPVESDGFFGFKLLYTSLKHKKEGTLVNFIKERFETVGKDTFSFRIAGTPVISTKNPENIKALLATQFSDFALGTRHAQFKPLLGDGIFTLDGSGWKHSRAMLRPQFAREQVAHVKSLEPHIQMLAKHVRRAKGGAFDVQSLFFRLTVDSATEFLFGESVESLQDESIGMAKDAVDFDGKAGFAEAFNTAQVYLSIRSLAQKAYFLVNNKEFRSSNEKVHKFADYYVQKALNSSPEELEKHSQDGYIFLYELVKQTRDPHVLRDQLLNILLAGRDTTAGLLSFTFYELARNPQVWSKLKEEIYEKFGKGDDARLEDITFESLKKCEYLKALLNEVLRLYPSVPQNFRVAQKDTSLPRGGGPNRDQPIFIAKGQTVTYTVYAMHRDEQFYGKDSEVFRPERWFEPETRKLGWAFLPFNGGPRICLGQQFALTEASYVIARLAQLFPNLASHDDEYPPRKASHLTMCHQSEVKISLA</sequence>
<gene>
    <name type="primary">CYP52A12</name>
    <name type="synonym">ALK1</name>
</gene>
<protein>
    <recommendedName>
        <fullName>Cytochrome P450 52A12</fullName>
        <ecNumber>1.14.14.-</ecNumber>
    </recommendedName>
    <alternativeName>
        <fullName>Alkane hydroxylase 1</fullName>
    </alternativeName>
    <alternativeName>
        <fullName>Alkane-inducible p450alk 1</fullName>
    </alternativeName>
    <alternativeName>
        <fullName>DH-ALK2</fullName>
    </alternativeName>
</protein>
<feature type="chain" id="PRO_0000052030" description="Cytochrome P450 52A12">
    <location>
        <begin position="1"/>
        <end position="519"/>
    </location>
</feature>
<feature type="binding site" description="axial binding residue" evidence="1">
    <location>
        <position position="467"/>
    </location>
    <ligand>
        <name>heme</name>
        <dbReference type="ChEBI" id="CHEBI:30413"/>
    </ligand>
    <ligandPart>
        <name>Fe</name>
        <dbReference type="ChEBI" id="CHEBI:18248"/>
    </ligandPart>
</feature>
<reference key="1">
    <citation type="journal article" date="1999" name="Gene">
        <title>Multiple p450alk (cytochrome P450 alkane hydroxylase) genes from the halotolerant yeast Debaryomyces hansenii.</title>
        <authorList>
            <person name="Yadav J.S."/>
            <person name="Loper J.C."/>
        </authorList>
    </citation>
    <scope>NUCLEOTIDE SEQUENCE [GENOMIC DNA]</scope>
    <source>
        <strain>ATCC 20317</strain>
    </source>
</reference>
<keyword id="KW-0349">Heme</keyword>
<keyword id="KW-0408">Iron</keyword>
<keyword id="KW-0472">Membrane</keyword>
<keyword id="KW-0479">Metal-binding</keyword>
<keyword id="KW-0503">Monooxygenase</keyword>
<keyword id="KW-0560">Oxidoreductase</keyword>
<dbReference type="EC" id="1.14.14.-"/>
<dbReference type="EMBL" id="AF103948">
    <property type="protein sequence ID" value="AAD22536.2"/>
    <property type="molecule type" value="Genomic_DNA"/>
</dbReference>
<dbReference type="SMR" id="Q9Y757"/>
<dbReference type="VEuPathDB" id="FungiDB:DEHA2E18612g"/>
<dbReference type="GO" id="GO:0016020">
    <property type="term" value="C:membrane"/>
    <property type="evidence" value="ECO:0007669"/>
    <property type="project" value="UniProtKB-SubCell"/>
</dbReference>
<dbReference type="GO" id="GO:0020037">
    <property type="term" value="F:heme binding"/>
    <property type="evidence" value="ECO:0007669"/>
    <property type="project" value="InterPro"/>
</dbReference>
<dbReference type="GO" id="GO:0005506">
    <property type="term" value="F:iron ion binding"/>
    <property type="evidence" value="ECO:0007669"/>
    <property type="project" value="InterPro"/>
</dbReference>
<dbReference type="GO" id="GO:0016712">
    <property type="term" value="F:oxidoreductase activity, acting on paired donors, with incorporation or reduction of molecular oxygen, reduced flavin or flavoprotein as one donor, and incorporation of one atom of oxygen"/>
    <property type="evidence" value="ECO:0007669"/>
    <property type="project" value="InterPro"/>
</dbReference>
<dbReference type="CDD" id="cd11063">
    <property type="entry name" value="CYP52"/>
    <property type="match status" value="1"/>
</dbReference>
<dbReference type="Gene3D" id="1.10.630.10">
    <property type="entry name" value="Cytochrome P450"/>
    <property type="match status" value="1"/>
</dbReference>
<dbReference type="InterPro" id="IPR001128">
    <property type="entry name" value="Cyt_P450"/>
</dbReference>
<dbReference type="InterPro" id="IPR017972">
    <property type="entry name" value="Cyt_P450_CS"/>
</dbReference>
<dbReference type="InterPro" id="IPR002974">
    <property type="entry name" value="Cyt_P450_E_CYP52_ascomycetes"/>
</dbReference>
<dbReference type="InterPro" id="IPR047146">
    <property type="entry name" value="Cyt_P450_E_CYP52_fungi"/>
</dbReference>
<dbReference type="InterPro" id="IPR002402">
    <property type="entry name" value="Cyt_P450_E_grp-II"/>
</dbReference>
<dbReference type="InterPro" id="IPR036396">
    <property type="entry name" value="Cyt_P450_sf"/>
</dbReference>
<dbReference type="PANTHER" id="PTHR24287">
    <property type="entry name" value="P450, PUTATIVE (EUROFUNG)-RELATED"/>
    <property type="match status" value="1"/>
</dbReference>
<dbReference type="PANTHER" id="PTHR24287:SF1">
    <property type="entry name" value="P450, PUTATIVE (EUROFUNG)-RELATED"/>
    <property type="match status" value="1"/>
</dbReference>
<dbReference type="Pfam" id="PF00067">
    <property type="entry name" value="p450"/>
    <property type="match status" value="1"/>
</dbReference>
<dbReference type="PRINTS" id="PR00464">
    <property type="entry name" value="EP450II"/>
</dbReference>
<dbReference type="PRINTS" id="PR01239">
    <property type="entry name" value="EP450IICYP52"/>
</dbReference>
<dbReference type="PRINTS" id="PR00385">
    <property type="entry name" value="P450"/>
</dbReference>
<dbReference type="SUPFAM" id="SSF48264">
    <property type="entry name" value="Cytochrome P450"/>
    <property type="match status" value="1"/>
</dbReference>
<dbReference type="PROSITE" id="PS00086">
    <property type="entry name" value="CYTOCHROME_P450"/>
    <property type="match status" value="1"/>
</dbReference>
<evidence type="ECO:0000250" key="1"/>
<evidence type="ECO:0000305" key="2"/>
<comment type="function">
    <text>Together with an NADPH cytochrome P450 the enzyme system catalyzes the terminal hydroxylation as the first step in the assimilation of alkanes and fatty acids.</text>
</comment>
<comment type="cofactor">
    <cofactor evidence="1">
        <name>heme</name>
        <dbReference type="ChEBI" id="CHEBI:30413"/>
    </cofactor>
</comment>
<comment type="subcellular location">
    <subcellularLocation>
        <location evidence="2">Membrane</location>
    </subcellularLocation>
</comment>
<comment type="induction">
    <text>By N-alkanes.</text>
</comment>
<comment type="similarity">
    <text evidence="2">Belongs to the cytochrome P450 family.</text>
</comment>
<name>CP52L_DEBHN</name>
<organism>
    <name type="scientific">Debaryomyces hansenii</name>
    <name type="common">Yeast</name>
    <name type="synonym">Torulaspora hansenii</name>
    <dbReference type="NCBI Taxonomy" id="4959"/>
    <lineage>
        <taxon>Eukaryota</taxon>
        <taxon>Fungi</taxon>
        <taxon>Dikarya</taxon>
        <taxon>Ascomycota</taxon>
        <taxon>Saccharomycotina</taxon>
        <taxon>Pichiomycetes</taxon>
        <taxon>Debaryomycetaceae</taxon>
        <taxon>Debaryomyces</taxon>
    </lineage>
</organism>